<sequence length="774" mass="82360">MSALHAFPGGLCLPANKERSTALPIQQAPLAQRYIVPLGQHIGAPARPCVEVGQAVLKGQTIALPDGTVSAALHAPTSGTVVAIGAHPYPHASGLPAPAIVIASDGLERWTELHPCPDFRAESPLALLERIRAAGIGGLGGAGFPTAAKLAARPAEKIHTLVVNGAECEPYISADDLLMRERATQVLGGIDILVQILCPEEVLVGIEDDKPEAIAALGAALGERPYRIVALPTRYPSGGERQLIQLLTGREVPADGLPADIGILCQNVGTLAAVHDAVVLGRPLISRITTLAGGALERPMNVEALIGTPVHELLAFAGLAEGRLERVLMGGPMMGFALPDLSVPLIKTCNCLLAGDATELPEPVPAMPCIRCGDCAQVCPVSLLPQQLHFFALGDEHEQLLAHNLFDCIECGACAYVCPSSIPLVQYYRASKAEIREQRQKLLKAEQSRERFEQRQARLRRDEERRAAERAQRAEKAALARAAQAEREEAAPATAVDPVQAAIERARARKQAGSGSERLKRLKIEASMARVALKKAEKQLLSHDTPEQHGLVAELRAAAEAADKALADAEASLPRDLPSAPPAALDDEAELKKAKAQAAMARAQLKRSEKAFGEAPGAEQRATLDELRAEVERCEATLARLERHAPKPAAPGDDGQAALKRAKIALVGKRAALKKAEQAGVMDSELERLRGELQAAERDLHAAEDACGKPAPELVRIDKRPVDPRIRELKTELAYARAALKKLERLANADAAALAAARARLSAAERALTEHGTE</sequence>
<organism>
    <name type="scientific">Pseudomonas aeruginosa (strain ATCC 15692 / DSM 22644 / CIP 104116 / JCM 14847 / LMG 12228 / 1C / PRS 101 / PAO1)</name>
    <dbReference type="NCBI Taxonomy" id="208964"/>
    <lineage>
        <taxon>Bacteria</taxon>
        <taxon>Pseudomonadati</taxon>
        <taxon>Pseudomonadota</taxon>
        <taxon>Gammaproteobacteria</taxon>
        <taxon>Pseudomonadales</taxon>
        <taxon>Pseudomonadaceae</taxon>
        <taxon>Pseudomonas</taxon>
    </lineage>
</organism>
<name>RNFC_PSEAE</name>
<accession>Q9HYB8</accession>
<comment type="function">
    <text evidence="1">Part of a membrane-bound complex that couples electron transfer with translocation of ions across the membrane.</text>
</comment>
<comment type="cofactor">
    <cofactor evidence="1">
        <name>[4Fe-4S] cluster</name>
        <dbReference type="ChEBI" id="CHEBI:49883"/>
    </cofactor>
    <text evidence="1">Binds 2 [4Fe-4S] clusters per subunit.</text>
</comment>
<comment type="subunit">
    <text evidence="1">The complex is composed of six subunits: RnfA, RnfB, RnfC, RnfD, RnfE and RnfG.</text>
</comment>
<comment type="subcellular location">
    <subcellularLocation>
        <location evidence="1">Cell inner membrane</location>
        <topology evidence="1">Peripheral membrane protein</topology>
    </subcellularLocation>
</comment>
<comment type="similarity">
    <text evidence="1">Belongs to the 4Fe4S bacterial-type ferredoxin family. RnfC subfamily.</text>
</comment>
<evidence type="ECO:0000255" key="1">
    <source>
        <dbReference type="HAMAP-Rule" id="MF_00461"/>
    </source>
</evidence>
<evidence type="ECO:0000256" key="2">
    <source>
        <dbReference type="SAM" id="MobiDB-lite"/>
    </source>
</evidence>
<proteinExistence type="inferred from homology"/>
<protein>
    <recommendedName>
        <fullName evidence="1">Ion-translocating oxidoreductase complex subunit C</fullName>
        <ecNumber evidence="1">7.-.-.-</ecNumber>
    </recommendedName>
    <alternativeName>
        <fullName evidence="1">Rnf electron transport complex subunit C</fullName>
    </alternativeName>
</protein>
<feature type="chain" id="PRO_0000073210" description="Ion-translocating oxidoreductase complex subunit C">
    <location>
        <begin position="1"/>
        <end position="774"/>
    </location>
</feature>
<feature type="domain" description="4Fe-4S ferredoxin-type 1" evidence="1">
    <location>
        <begin position="359"/>
        <end position="389"/>
    </location>
</feature>
<feature type="domain" description="4Fe-4S ferredoxin-type 2" evidence="1">
    <location>
        <begin position="399"/>
        <end position="428"/>
    </location>
</feature>
<feature type="region of interest" description="Disordered" evidence="2">
    <location>
        <begin position="453"/>
        <end position="493"/>
    </location>
</feature>
<feature type="compositionally biased region" description="Basic and acidic residues" evidence="2">
    <location>
        <begin position="453"/>
        <end position="490"/>
    </location>
</feature>
<feature type="binding site" evidence="1">
    <location>
        <position position="369"/>
    </location>
    <ligand>
        <name>[4Fe-4S] cluster</name>
        <dbReference type="ChEBI" id="CHEBI:49883"/>
        <label>1</label>
    </ligand>
</feature>
<feature type="binding site" evidence="1">
    <location>
        <position position="372"/>
    </location>
    <ligand>
        <name>[4Fe-4S] cluster</name>
        <dbReference type="ChEBI" id="CHEBI:49883"/>
        <label>1</label>
    </ligand>
</feature>
<feature type="binding site" evidence="1">
    <location>
        <position position="375"/>
    </location>
    <ligand>
        <name>[4Fe-4S] cluster</name>
        <dbReference type="ChEBI" id="CHEBI:49883"/>
        <label>1</label>
    </ligand>
</feature>
<feature type="binding site" evidence="1">
    <location>
        <position position="379"/>
    </location>
    <ligand>
        <name>[4Fe-4S] cluster</name>
        <dbReference type="ChEBI" id="CHEBI:49883"/>
        <label>2</label>
    </ligand>
</feature>
<feature type="binding site" evidence="1">
    <location>
        <position position="408"/>
    </location>
    <ligand>
        <name>[4Fe-4S] cluster</name>
        <dbReference type="ChEBI" id="CHEBI:49883"/>
        <label>2</label>
    </ligand>
</feature>
<feature type="binding site" evidence="1">
    <location>
        <position position="411"/>
    </location>
    <ligand>
        <name>[4Fe-4S] cluster</name>
        <dbReference type="ChEBI" id="CHEBI:49883"/>
        <label>2</label>
    </ligand>
</feature>
<feature type="binding site" evidence="1">
    <location>
        <position position="414"/>
    </location>
    <ligand>
        <name>[4Fe-4S] cluster</name>
        <dbReference type="ChEBI" id="CHEBI:49883"/>
        <label>2</label>
    </ligand>
</feature>
<feature type="binding site" evidence="1">
    <location>
        <position position="418"/>
    </location>
    <ligand>
        <name>[4Fe-4S] cluster</name>
        <dbReference type="ChEBI" id="CHEBI:49883"/>
        <label>1</label>
    </ligand>
</feature>
<keyword id="KW-0004">4Fe-4S</keyword>
<keyword id="KW-0997">Cell inner membrane</keyword>
<keyword id="KW-1003">Cell membrane</keyword>
<keyword id="KW-0249">Electron transport</keyword>
<keyword id="KW-0408">Iron</keyword>
<keyword id="KW-0411">Iron-sulfur</keyword>
<keyword id="KW-0472">Membrane</keyword>
<keyword id="KW-0479">Metal-binding</keyword>
<keyword id="KW-1185">Reference proteome</keyword>
<keyword id="KW-0677">Repeat</keyword>
<keyword id="KW-1278">Translocase</keyword>
<keyword id="KW-0813">Transport</keyword>
<dbReference type="EC" id="7.-.-.-" evidence="1"/>
<dbReference type="EMBL" id="AE004091">
    <property type="protein sequence ID" value="AAG06879.1"/>
    <property type="molecule type" value="Genomic_DNA"/>
</dbReference>
<dbReference type="PIR" id="D83208">
    <property type="entry name" value="D83208"/>
</dbReference>
<dbReference type="RefSeq" id="NP_252181.1">
    <property type="nucleotide sequence ID" value="NC_002516.2"/>
</dbReference>
<dbReference type="SMR" id="Q9HYB8"/>
<dbReference type="FunCoup" id="Q9HYB8">
    <property type="interactions" value="62"/>
</dbReference>
<dbReference type="STRING" id="208964.PA3491"/>
<dbReference type="PaxDb" id="208964-PA3491"/>
<dbReference type="GeneID" id="879869"/>
<dbReference type="KEGG" id="pae:PA3491"/>
<dbReference type="PATRIC" id="fig|208964.12.peg.3655"/>
<dbReference type="PseudoCAP" id="PA3491"/>
<dbReference type="HOGENOM" id="CLU_010808_2_1_6"/>
<dbReference type="InParanoid" id="Q9HYB8"/>
<dbReference type="OrthoDB" id="9767754at2"/>
<dbReference type="PhylomeDB" id="Q9HYB8"/>
<dbReference type="BioCyc" id="PAER208964:G1FZ6-3559-MONOMER"/>
<dbReference type="Proteomes" id="UP000002438">
    <property type="component" value="Chromosome"/>
</dbReference>
<dbReference type="GO" id="GO:0005886">
    <property type="term" value="C:plasma membrane"/>
    <property type="evidence" value="ECO:0007669"/>
    <property type="project" value="UniProtKB-SubCell"/>
</dbReference>
<dbReference type="GO" id="GO:0051539">
    <property type="term" value="F:4 iron, 4 sulfur cluster binding"/>
    <property type="evidence" value="ECO:0007669"/>
    <property type="project" value="UniProtKB-KW"/>
</dbReference>
<dbReference type="GO" id="GO:0009055">
    <property type="term" value="F:electron transfer activity"/>
    <property type="evidence" value="ECO:0007669"/>
    <property type="project" value="InterPro"/>
</dbReference>
<dbReference type="GO" id="GO:0046872">
    <property type="term" value="F:metal ion binding"/>
    <property type="evidence" value="ECO:0007669"/>
    <property type="project" value="UniProtKB-KW"/>
</dbReference>
<dbReference type="GO" id="GO:0022900">
    <property type="term" value="P:electron transport chain"/>
    <property type="evidence" value="ECO:0007669"/>
    <property type="project" value="UniProtKB-UniRule"/>
</dbReference>
<dbReference type="Gene3D" id="3.30.70.20">
    <property type="match status" value="1"/>
</dbReference>
<dbReference type="Gene3D" id="3.40.50.11540">
    <property type="entry name" value="NADH-ubiquinone oxidoreductase 51kDa subunit"/>
    <property type="match status" value="1"/>
</dbReference>
<dbReference type="HAMAP" id="MF_00461">
    <property type="entry name" value="RsxC_RnfC"/>
    <property type="match status" value="1"/>
</dbReference>
<dbReference type="InterPro" id="IPR017896">
    <property type="entry name" value="4Fe4S_Fe-S-bd"/>
</dbReference>
<dbReference type="InterPro" id="IPR017900">
    <property type="entry name" value="4Fe4S_Fe_S_CS"/>
</dbReference>
<dbReference type="InterPro" id="IPR010208">
    <property type="entry name" value="Ion_transpt_RnfC/RsxC"/>
</dbReference>
<dbReference type="InterPro" id="IPR011538">
    <property type="entry name" value="Nuo51_FMN-bd"/>
</dbReference>
<dbReference type="InterPro" id="IPR037225">
    <property type="entry name" value="Nuo51_FMN-bd_sf"/>
</dbReference>
<dbReference type="InterPro" id="IPR026902">
    <property type="entry name" value="RnfC_N"/>
</dbReference>
<dbReference type="InterPro" id="IPR019554">
    <property type="entry name" value="Soluble_ligand-bd"/>
</dbReference>
<dbReference type="NCBIfam" id="NF003454">
    <property type="entry name" value="PRK05035.1"/>
    <property type="match status" value="1"/>
</dbReference>
<dbReference type="NCBIfam" id="TIGR01945">
    <property type="entry name" value="rnfC"/>
    <property type="match status" value="1"/>
</dbReference>
<dbReference type="PANTHER" id="PTHR43034">
    <property type="entry name" value="ION-TRANSLOCATING OXIDOREDUCTASE COMPLEX SUBUNIT C"/>
    <property type="match status" value="1"/>
</dbReference>
<dbReference type="PANTHER" id="PTHR43034:SF2">
    <property type="entry name" value="ION-TRANSLOCATING OXIDOREDUCTASE COMPLEX SUBUNIT C"/>
    <property type="match status" value="1"/>
</dbReference>
<dbReference type="Pfam" id="PF01512">
    <property type="entry name" value="Complex1_51K"/>
    <property type="match status" value="1"/>
</dbReference>
<dbReference type="Pfam" id="PF12838">
    <property type="entry name" value="Fer4_7"/>
    <property type="match status" value="1"/>
</dbReference>
<dbReference type="Pfam" id="PF13375">
    <property type="entry name" value="RnfC_N"/>
    <property type="match status" value="1"/>
</dbReference>
<dbReference type="Pfam" id="PF10531">
    <property type="entry name" value="SLBB"/>
    <property type="match status" value="1"/>
</dbReference>
<dbReference type="SUPFAM" id="SSF46548">
    <property type="entry name" value="alpha-helical ferredoxin"/>
    <property type="match status" value="1"/>
</dbReference>
<dbReference type="SUPFAM" id="SSF142019">
    <property type="entry name" value="Nqo1 FMN-binding domain-like"/>
    <property type="match status" value="1"/>
</dbReference>
<dbReference type="PROSITE" id="PS00198">
    <property type="entry name" value="4FE4S_FER_1"/>
    <property type="match status" value="2"/>
</dbReference>
<dbReference type="PROSITE" id="PS51379">
    <property type="entry name" value="4FE4S_FER_2"/>
    <property type="match status" value="2"/>
</dbReference>
<reference key="1">
    <citation type="journal article" date="2000" name="Nature">
        <title>Complete genome sequence of Pseudomonas aeruginosa PAO1, an opportunistic pathogen.</title>
        <authorList>
            <person name="Stover C.K."/>
            <person name="Pham X.-Q.T."/>
            <person name="Erwin A.L."/>
            <person name="Mizoguchi S.D."/>
            <person name="Warrener P."/>
            <person name="Hickey M.J."/>
            <person name="Brinkman F.S.L."/>
            <person name="Hufnagle W.O."/>
            <person name="Kowalik D.J."/>
            <person name="Lagrou M."/>
            <person name="Garber R.L."/>
            <person name="Goltry L."/>
            <person name="Tolentino E."/>
            <person name="Westbrock-Wadman S."/>
            <person name="Yuan Y."/>
            <person name="Brody L.L."/>
            <person name="Coulter S.N."/>
            <person name="Folger K.R."/>
            <person name="Kas A."/>
            <person name="Larbig K."/>
            <person name="Lim R.M."/>
            <person name="Smith K.A."/>
            <person name="Spencer D.H."/>
            <person name="Wong G.K.-S."/>
            <person name="Wu Z."/>
            <person name="Paulsen I.T."/>
            <person name="Reizer J."/>
            <person name="Saier M.H. Jr."/>
            <person name="Hancock R.E.W."/>
            <person name="Lory S."/>
            <person name="Olson M.V."/>
        </authorList>
    </citation>
    <scope>NUCLEOTIDE SEQUENCE [LARGE SCALE GENOMIC DNA]</scope>
    <source>
        <strain>ATCC 15692 / DSM 22644 / CIP 104116 / JCM 14847 / LMG 12228 / 1C / PRS 101 / PAO1</strain>
    </source>
</reference>
<gene>
    <name evidence="1" type="primary">rnfC</name>
    <name type="ordered locus">PA3491</name>
</gene>